<dbReference type="PIR" id="A03056">
    <property type="entry name" value="PVWI"/>
</dbReference>
<dbReference type="PDB" id="1A75">
    <property type="method" value="X-ray"/>
    <property type="resolution" value="1.90 A"/>
    <property type="chains" value="A/B=1-108"/>
</dbReference>
<dbReference type="PDBsum" id="1A75"/>
<dbReference type="SMR" id="P02621"/>
<dbReference type="iPTMnet" id="P02621"/>
<dbReference type="EvolutionaryTrace" id="P02621"/>
<dbReference type="GO" id="GO:0005737">
    <property type="term" value="C:cytoplasm"/>
    <property type="evidence" value="ECO:0007669"/>
    <property type="project" value="TreeGrafter"/>
</dbReference>
<dbReference type="GO" id="GO:0005509">
    <property type="term" value="F:calcium ion binding"/>
    <property type="evidence" value="ECO:0007669"/>
    <property type="project" value="InterPro"/>
</dbReference>
<dbReference type="CDD" id="cd16255">
    <property type="entry name" value="EFh_parvalbumin_beta"/>
    <property type="match status" value="1"/>
</dbReference>
<dbReference type="FunFam" id="1.10.238.10:FF:000060">
    <property type="entry name" value="Parvalbumin, thymic"/>
    <property type="match status" value="1"/>
</dbReference>
<dbReference type="Gene3D" id="1.10.238.10">
    <property type="entry name" value="EF-hand"/>
    <property type="match status" value="1"/>
</dbReference>
<dbReference type="InterPro" id="IPR011992">
    <property type="entry name" value="EF-hand-dom_pair"/>
</dbReference>
<dbReference type="InterPro" id="IPR018247">
    <property type="entry name" value="EF_Hand_1_Ca_BS"/>
</dbReference>
<dbReference type="InterPro" id="IPR002048">
    <property type="entry name" value="EF_hand_dom"/>
</dbReference>
<dbReference type="InterPro" id="IPR008080">
    <property type="entry name" value="Parvalbumin"/>
</dbReference>
<dbReference type="PANTHER" id="PTHR11653:SF12">
    <property type="entry name" value="PARVALBUMIN"/>
    <property type="match status" value="1"/>
</dbReference>
<dbReference type="PANTHER" id="PTHR11653">
    <property type="entry name" value="PARVALBUMIN ALPHA"/>
    <property type="match status" value="1"/>
</dbReference>
<dbReference type="Pfam" id="PF13499">
    <property type="entry name" value="EF-hand_7"/>
    <property type="match status" value="1"/>
</dbReference>
<dbReference type="PRINTS" id="PR01697">
    <property type="entry name" value="PARVALBUMIN"/>
</dbReference>
<dbReference type="SMART" id="SM00054">
    <property type="entry name" value="EFh"/>
    <property type="match status" value="2"/>
</dbReference>
<dbReference type="SUPFAM" id="SSF47473">
    <property type="entry name" value="EF-hand"/>
    <property type="match status" value="1"/>
</dbReference>
<dbReference type="PROSITE" id="PS00018">
    <property type="entry name" value="EF_HAND_1"/>
    <property type="match status" value="2"/>
</dbReference>
<dbReference type="PROSITE" id="PS50222">
    <property type="entry name" value="EF_HAND_2"/>
    <property type="match status" value="2"/>
</dbReference>
<accession>P02621</accession>
<reference key="1">
    <citation type="journal article" date="1977" name="Comp. Biochem. Physiol.">
        <title>The amino acid sequence of the major parvalbumin of the whiting (Gadus merlangus).</title>
        <authorList>
            <person name="Joassin L."/>
            <person name="Gerday C."/>
        </authorList>
    </citation>
    <scope>PROTEIN SEQUENCE</scope>
    <scope>ACETYLATION AT ALA-1</scope>
    <source>
        <tissue>Muscle</tissue>
    </source>
</reference>
<reference key="2">
    <citation type="journal article" date="1980" name="Eur. J. Biochem.">
        <title>Fluorescence studies of the calcium binding to whiting (Gadus merlangus) parvalbumin.</title>
        <authorList>
            <person name="Permyakov E.A."/>
            <person name="Yarmolenko V.V."/>
            <person name="Emelyanenko V.I."/>
            <person name="Burstein E.A."/>
            <person name="Closset J."/>
            <person name="Gerday C."/>
        </authorList>
    </citation>
    <scope>CALCIUM-BINDING</scope>
</reference>
<reference key="3">
    <citation type="journal article" date="1988" name="Biochemistry">
        <title>Kinetic mechanism of calcium binding to whiting parvalbumin.</title>
        <authorList>
            <person name="White H.D."/>
        </authorList>
    </citation>
    <scope>CALCIUM-BINDING DATA</scope>
</reference>
<reference key="4">
    <citation type="submission" date="1998-03" db="PDB data bank">
        <authorList>
            <person name="Declercq J.P."/>
            <person name="Baneres J.L."/>
            <person name="Rambaud J."/>
            <person name="Parello J."/>
        </authorList>
    </citation>
    <scope>X-RAY CRYSTALLOGRAPHY (1.9 ANGSTROMS)</scope>
    <scope>SEQUENCE REVISION TO 11-12</scope>
    <source>
        <tissue>Muscle</tissue>
    </source>
</reference>
<proteinExistence type="evidence at protein level"/>
<sequence length="108" mass="11323">AFAGILADADCAAAVKACEAADSFSYKAFFAKCGLSGKSADDIKKAFVFIDQDKSGFIEEDELKLFLQVFKAGARALTDAETKAFLKAGDSDGDGAIGVEEWVALVKA</sequence>
<evidence type="ECO:0000255" key="1">
    <source>
        <dbReference type="PROSITE-ProRule" id="PRU00448"/>
    </source>
</evidence>
<evidence type="ECO:0000269" key="2">
    <source>
    </source>
</evidence>
<evidence type="ECO:0000269" key="3">
    <source ref="4"/>
</evidence>
<evidence type="ECO:0000305" key="4"/>
<evidence type="ECO:0007744" key="5">
    <source>
        <dbReference type="PDB" id="1A75"/>
    </source>
</evidence>
<evidence type="ECO:0007829" key="6">
    <source>
        <dbReference type="PDB" id="1A75"/>
    </source>
</evidence>
<organism>
    <name type="scientific">Merlangius merlangus</name>
    <name type="common">Whiting</name>
    <name type="synonym">Gadus merlangus</name>
    <dbReference type="NCBI Taxonomy" id="8058"/>
    <lineage>
        <taxon>Eukaryota</taxon>
        <taxon>Metazoa</taxon>
        <taxon>Chordata</taxon>
        <taxon>Craniata</taxon>
        <taxon>Vertebrata</taxon>
        <taxon>Euteleostomi</taxon>
        <taxon>Actinopterygii</taxon>
        <taxon>Neopterygii</taxon>
        <taxon>Teleostei</taxon>
        <taxon>Neoteleostei</taxon>
        <taxon>Acanthomorphata</taxon>
        <taxon>Zeiogadaria</taxon>
        <taxon>Gadariae</taxon>
        <taxon>Gadiformes</taxon>
        <taxon>Gadoidei</taxon>
        <taxon>Gadidae</taxon>
        <taxon>Merlangius</taxon>
    </lineage>
</organism>
<protein>
    <recommendedName>
        <fullName>Parvalbumin beta</fullName>
    </recommendedName>
</protein>
<feature type="chain" id="PRO_0000073615" description="Parvalbumin beta">
    <location>
        <begin position="1"/>
        <end position="108"/>
    </location>
</feature>
<feature type="domain" description="EF-hand 1" evidence="1">
    <location>
        <begin position="38"/>
        <end position="73"/>
    </location>
</feature>
<feature type="domain" description="EF-hand 2" evidence="1">
    <location>
        <begin position="77"/>
        <end position="108"/>
    </location>
</feature>
<feature type="binding site" evidence="1 3 5">
    <location>
        <position position="51"/>
    </location>
    <ligand>
        <name>Ca(2+)</name>
        <dbReference type="ChEBI" id="CHEBI:29108"/>
        <label>1</label>
    </ligand>
</feature>
<feature type="binding site" evidence="1 3 5">
    <location>
        <position position="53"/>
    </location>
    <ligand>
        <name>Ca(2+)</name>
        <dbReference type="ChEBI" id="CHEBI:29108"/>
        <label>1</label>
    </ligand>
</feature>
<feature type="binding site" evidence="1 3 5">
    <location>
        <position position="55"/>
    </location>
    <ligand>
        <name>Ca(2+)</name>
        <dbReference type="ChEBI" id="CHEBI:29108"/>
        <label>1</label>
    </ligand>
</feature>
<feature type="binding site" evidence="3 5">
    <location>
        <position position="57"/>
    </location>
    <ligand>
        <name>Ca(2+)</name>
        <dbReference type="ChEBI" id="CHEBI:29108"/>
        <label>1</label>
    </ligand>
</feature>
<feature type="binding site" evidence="3 5">
    <location>
        <position position="59"/>
    </location>
    <ligand>
        <name>Ca(2+)</name>
        <dbReference type="ChEBI" id="CHEBI:29108"/>
        <label>1</label>
    </ligand>
</feature>
<feature type="binding site" evidence="1 3 5">
    <location>
        <position position="62"/>
    </location>
    <ligand>
        <name>Ca(2+)</name>
        <dbReference type="ChEBI" id="CHEBI:29108"/>
        <label>1</label>
    </ligand>
</feature>
<feature type="binding site" evidence="1 3 5">
    <location>
        <position position="90"/>
    </location>
    <ligand>
        <name>Ca(2+)</name>
        <dbReference type="ChEBI" id="CHEBI:29108"/>
        <label>2</label>
    </ligand>
</feature>
<feature type="binding site" evidence="1 3 5">
    <location>
        <position position="92"/>
    </location>
    <ligand>
        <name>Ca(2+)</name>
        <dbReference type="ChEBI" id="CHEBI:29108"/>
        <label>2</label>
    </ligand>
</feature>
<feature type="binding site" evidence="1 3 5">
    <location>
        <position position="94"/>
    </location>
    <ligand>
        <name>Ca(2+)</name>
        <dbReference type="ChEBI" id="CHEBI:29108"/>
        <label>2</label>
    </ligand>
</feature>
<feature type="binding site" evidence="3 5">
    <location>
        <position position="96"/>
    </location>
    <ligand>
        <name>Ca(2+)</name>
        <dbReference type="ChEBI" id="CHEBI:29108"/>
        <label>2</label>
    </ligand>
</feature>
<feature type="binding site" evidence="1 3 5">
    <location>
        <position position="101"/>
    </location>
    <ligand>
        <name>Ca(2+)</name>
        <dbReference type="ChEBI" id="CHEBI:29108"/>
        <label>2</label>
    </ligand>
</feature>
<feature type="modified residue" description="N-acetylalanine" evidence="2">
    <location>
        <position position="1"/>
    </location>
</feature>
<feature type="disulfide bond" evidence="3 5">
    <location>
        <begin position="11"/>
        <end position="33"/>
    </location>
</feature>
<feature type="turn" evidence="6">
    <location>
        <begin position="3"/>
        <end position="6"/>
    </location>
</feature>
<feature type="helix" evidence="6">
    <location>
        <begin position="9"/>
        <end position="17"/>
    </location>
</feature>
<feature type="helix" evidence="6">
    <location>
        <begin position="26"/>
        <end position="32"/>
    </location>
</feature>
<feature type="helix" evidence="6">
    <location>
        <begin position="40"/>
        <end position="50"/>
    </location>
</feature>
<feature type="strand" evidence="6">
    <location>
        <begin position="55"/>
        <end position="59"/>
    </location>
</feature>
<feature type="helix" evidence="6">
    <location>
        <begin position="60"/>
        <end position="63"/>
    </location>
</feature>
<feature type="helix" evidence="6">
    <location>
        <begin position="66"/>
        <end position="70"/>
    </location>
</feature>
<feature type="helix" evidence="6">
    <location>
        <begin position="79"/>
        <end position="89"/>
    </location>
</feature>
<feature type="strand" evidence="6">
    <location>
        <begin position="94"/>
        <end position="97"/>
    </location>
</feature>
<feature type="helix" evidence="6">
    <location>
        <begin position="99"/>
        <end position="106"/>
    </location>
</feature>
<comment type="function">
    <text>In muscle, parvalbumin is thought to be involved in relaxation after contraction. It binds two calcium ions.</text>
</comment>
<comment type="miscellaneous">
    <text>This parvalbumin has an isoelectric point of 4.50.</text>
</comment>
<comment type="similarity">
    <text evidence="4">Belongs to the parvalbumin family.</text>
</comment>
<name>PRVB_MERMR</name>
<keyword id="KW-0002">3D-structure</keyword>
<keyword id="KW-0007">Acetylation</keyword>
<keyword id="KW-0106">Calcium</keyword>
<keyword id="KW-0903">Direct protein sequencing</keyword>
<keyword id="KW-1015">Disulfide bond</keyword>
<keyword id="KW-0479">Metal-binding</keyword>
<keyword id="KW-0514">Muscle protein</keyword>
<keyword id="KW-0677">Repeat</keyword>